<accession>O15143</accession>
<accession>Q9BU00</accession>
<organism>
    <name type="scientific">Homo sapiens</name>
    <name type="common">Human</name>
    <dbReference type="NCBI Taxonomy" id="9606"/>
    <lineage>
        <taxon>Eukaryota</taxon>
        <taxon>Metazoa</taxon>
        <taxon>Chordata</taxon>
        <taxon>Craniata</taxon>
        <taxon>Vertebrata</taxon>
        <taxon>Euteleostomi</taxon>
        <taxon>Mammalia</taxon>
        <taxon>Eutheria</taxon>
        <taxon>Euarchontoglires</taxon>
        <taxon>Primates</taxon>
        <taxon>Haplorrhini</taxon>
        <taxon>Catarrhini</taxon>
        <taxon>Hominidae</taxon>
        <taxon>Homo</taxon>
    </lineage>
</organism>
<gene>
    <name evidence="7" type="primary">ARPC1B</name>
    <name type="synonym">ARC41</name>
</gene>
<evidence type="ECO:0000269" key="1">
    <source>
    </source>
</evidence>
<evidence type="ECO:0000269" key="2">
    <source>
    </source>
</evidence>
<evidence type="ECO:0000269" key="3">
    <source>
    </source>
</evidence>
<evidence type="ECO:0000269" key="4">
    <source>
    </source>
</evidence>
<evidence type="ECO:0000269" key="5">
    <source>
    </source>
</evidence>
<evidence type="ECO:0000305" key="6"/>
<evidence type="ECO:0000312" key="7">
    <source>
        <dbReference type="HGNC" id="HGNC:704"/>
    </source>
</evidence>
<dbReference type="EMBL" id="AF006084">
    <property type="protein sequence ID" value="AAB64189.1"/>
    <property type="molecule type" value="mRNA"/>
</dbReference>
<dbReference type="EMBL" id="AC004922">
    <property type="status" value="NOT_ANNOTATED_CDS"/>
    <property type="molecule type" value="Genomic_DNA"/>
</dbReference>
<dbReference type="EMBL" id="BC002562">
    <property type="protein sequence ID" value="AAH02562.1"/>
    <property type="molecule type" value="mRNA"/>
</dbReference>
<dbReference type="EMBL" id="BC002988">
    <property type="protein sequence ID" value="AAH02988.2"/>
    <property type="molecule type" value="mRNA"/>
</dbReference>
<dbReference type="EMBL" id="BC007555">
    <property type="protein sequence ID" value="AAH07555.1"/>
    <property type="molecule type" value="mRNA"/>
</dbReference>
<dbReference type="CCDS" id="CCDS5661.1"/>
<dbReference type="RefSeq" id="NP_005711.1">
    <property type="nucleotide sequence ID" value="NM_005720.4"/>
</dbReference>
<dbReference type="RefSeq" id="XP_006715888.1">
    <property type="nucleotide sequence ID" value="XM_006715825.1"/>
</dbReference>
<dbReference type="RefSeq" id="XP_006715889.1">
    <property type="nucleotide sequence ID" value="XM_006715826.1"/>
</dbReference>
<dbReference type="RefSeq" id="XP_024302396.1">
    <property type="nucleotide sequence ID" value="XM_024446628.2"/>
</dbReference>
<dbReference type="RefSeq" id="XP_054212954.1">
    <property type="nucleotide sequence ID" value="XM_054356979.1"/>
</dbReference>
<dbReference type="RefSeq" id="XP_054212955.1">
    <property type="nucleotide sequence ID" value="XM_054356980.1"/>
</dbReference>
<dbReference type="RefSeq" id="XP_054212956.1">
    <property type="nucleotide sequence ID" value="XM_054356981.1"/>
</dbReference>
<dbReference type="RefSeq" id="XP_054212957.1">
    <property type="nucleotide sequence ID" value="XM_054356982.1"/>
</dbReference>
<dbReference type="RefSeq" id="XP_054212958.1">
    <property type="nucleotide sequence ID" value="XM_054356983.1"/>
</dbReference>
<dbReference type="PDB" id="6UHC">
    <property type="method" value="EM"/>
    <property type="resolution" value="3.90 A"/>
    <property type="chains" value="C=1-372"/>
</dbReference>
<dbReference type="PDB" id="6YW6">
    <property type="method" value="EM"/>
    <property type="resolution" value="4.20 A"/>
    <property type="chains" value="C=1-372"/>
</dbReference>
<dbReference type="PDB" id="8P94">
    <property type="method" value="EM"/>
    <property type="resolution" value="3.30 A"/>
    <property type="chains" value="C=1-372"/>
</dbReference>
<dbReference type="PDBsum" id="6UHC"/>
<dbReference type="PDBsum" id="6YW6"/>
<dbReference type="PDBsum" id="8P94"/>
<dbReference type="EMDB" id="EMD-10959"/>
<dbReference type="EMDB" id="EMD-17558"/>
<dbReference type="EMDB" id="EMD-20770"/>
<dbReference type="SMR" id="O15143"/>
<dbReference type="BioGRID" id="115402">
    <property type="interactions" value="244"/>
</dbReference>
<dbReference type="ComplexPortal" id="CPX-2579">
    <property type="entry name" value="Actin-related protein 2/3 complex, ARPC1B-ACTR3-ARPC5 variant"/>
</dbReference>
<dbReference type="ComplexPortal" id="CPX-2580">
    <property type="entry name" value="Actin-related protein 2/3 complex, ARPC1B-ACTR3B-ARPC5L variant"/>
</dbReference>
<dbReference type="ComplexPortal" id="CPX-2583">
    <property type="entry name" value="Actin-related protein 2/3 complex, ARPC1B-ACTR3B-ARPC5 variant"/>
</dbReference>
<dbReference type="ComplexPortal" id="CPX-2663">
    <property type="entry name" value="Actin-related protein 2/3 complex, ARPC1B-ACTR3-ARPC5L variant"/>
</dbReference>
<dbReference type="CORUM" id="O15143"/>
<dbReference type="DIP" id="DIP-41254N"/>
<dbReference type="FunCoup" id="O15143">
    <property type="interactions" value="1496"/>
</dbReference>
<dbReference type="IntAct" id="O15143">
    <property type="interactions" value="87"/>
</dbReference>
<dbReference type="MINT" id="O15143"/>
<dbReference type="STRING" id="9606.ENSP00000389631"/>
<dbReference type="ChEMBL" id="CHEMBL4295656"/>
<dbReference type="DrugBank" id="DB08236">
    <property type="generic name" value="(2S)-2-(3-bromophenyl)-3-(5-chloro-2-hydroxyphenyl)-1,3-thiazolidin-4-one"/>
</dbReference>
<dbReference type="DrugBank" id="DB08235">
    <property type="generic name" value="N-[2-(2-methyl-1H-indol-3-yl)ethyl]thiophene-2-carboxamide"/>
</dbReference>
<dbReference type="GlyGen" id="O15143">
    <property type="glycosylation" value="2 sites, 1 O-linked glycan (1 site)"/>
</dbReference>
<dbReference type="iPTMnet" id="O15143"/>
<dbReference type="PhosphoSitePlus" id="O15143"/>
<dbReference type="SwissPalm" id="O15143"/>
<dbReference type="BioMuta" id="ARPC1B"/>
<dbReference type="jPOST" id="O15143"/>
<dbReference type="MassIVE" id="O15143"/>
<dbReference type="PaxDb" id="9606-ENSP00000389631"/>
<dbReference type="PeptideAtlas" id="O15143"/>
<dbReference type="ProteomicsDB" id="48468"/>
<dbReference type="Pumba" id="O15143"/>
<dbReference type="Antibodypedia" id="1378">
    <property type="antibodies" value="214 antibodies from 31 providers"/>
</dbReference>
<dbReference type="DNASU" id="10095"/>
<dbReference type="Ensembl" id="ENST00000414376.6">
    <property type="protein sequence ID" value="ENSP00000398620.2"/>
    <property type="gene ID" value="ENSG00000130429.16"/>
</dbReference>
<dbReference type="Ensembl" id="ENST00000427217.6">
    <property type="protein sequence ID" value="ENSP00000403211.2"/>
    <property type="gene ID" value="ENSG00000130429.16"/>
</dbReference>
<dbReference type="Ensembl" id="ENST00000431816.6">
    <property type="protein sequence ID" value="ENSP00000398110.2"/>
    <property type="gene ID" value="ENSG00000130429.16"/>
</dbReference>
<dbReference type="Ensembl" id="ENST00000451682.5">
    <property type="protein sequence ID" value="ENSP00000389631.1"/>
    <property type="gene ID" value="ENSG00000130429.16"/>
</dbReference>
<dbReference type="Ensembl" id="ENST00000455009.6">
    <property type="protein sequence ID" value="ENSP00000410238.2"/>
    <property type="gene ID" value="ENSG00000130429.16"/>
</dbReference>
<dbReference type="Ensembl" id="ENST00000458033.6">
    <property type="protein sequence ID" value="ENSP00000388802.2"/>
    <property type="gene ID" value="ENSG00000130429.16"/>
</dbReference>
<dbReference type="Ensembl" id="ENST00000645391.1">
    <property type="protein sequence ID" value="ENSP00000494033.1"/>
    <property type="gene ID" value="ENSG00000130429.16"/>
</dbReference>
<dbReference type="Ensembl" id="ENST00000646101.2">
    <property type="protein sequence ID" value="ENSP00000496599.1"/>
    <property type="gene ID" value="ENSG00000130429.16"/>
</dbReference>
<dbReference type="GeneID" id="10095"/>
<dbReference type="KEGG" id="hsa:10095"/>
<dbReference type="MANE-Select" id="ENST00000646101.2">
    <property type="protein sequence ID" value="ENSP00000496599.1"/>
    <property type="RefSeq nucleotide sequence ID" value="NM_005720.4"/>
    <property type="RefSeq protein sequence ID" value="NP_005711.1"/>
</dbReference>
<dbReference type="UCSC" id="uc003upz.4">
    <property type="organism name" value="human"/>
</dbReference>
<dbReference type="AGR" id="HGNC:704"/>
<dbReference type="CTD" id="10095"/>
<dbReference type="DisGeNET" id="10095"/>
<dbReference type="GeneCards" id="ARPC1B"/>
<dbReference type="HGNC" id="HGNC:704">
    <property type="gene designation" value="ARPC1B"/>
</dbReference>
<dbReference type="HPA" id="ENSG00000130429">
    <property type="expression patterns" value="Tissue enhanced (lymphoid)"/>
</dbReference>
<dbReference type="MalaCards" id="ARPC1B"/>
<dbReference type="MIM" id="604223">
    <property type="type" value="gene"/>
</dbReference>
<dbReference type="MIM" id="617718">
    <property type="type" value="phenotype"/>
</dbReference>
<dbReference type="neXtProt" id="NX_O15143"/>
<dbReference type="OpenTargets" id="ENSG00000130429"/>
<dbReference type="PharmGKB" id="PA24998"/>
<dbReference type="VEuPathDB" id="HostDB:ENSG00000130429"/>
<dbReference type="eggNOG" id="KOG1523">
    <property type="taxonomic scope" value="Eukaryota"/>
</dbReference>
<dbReference type="GeneTree" id="ENSGT00950000183183"/>
<dbReference type="HOGENOM" id="CLU_034396_1_0_1"/>
<dbReference type="InParanoid" id="O15143"/>
<dbReference type="OMA" id="IWDVKVT"/>
<dbReference type="OrthoDB" id="406844at2759"/>
<dbReference type="PAN-GO" id="O15143">
    <property type="GO annotations" value="2 GO annotations based on evolutionary models"/>
</dbReference>
<dbReference type="PhylomeDB" id="O15143"/>
<dbReference type="TreeFam" id="TF315041"/>
<dbReference type="PathwayCommons" id="O15143"/>
<dbReference type="Reactome" id="R-HSA-2029482">
    <property type="pathway name" value="Regulation of actin dynamics for phagocytic cup formation"/>
</dbReference>
<dbReference type="Reactome" id="R-HSA-3928662">
    <property type="pathway name" value="EPHB-mediated forward signaling"/>
</dbReference>
<dbReference type="Reactome" id="R-HSA-5663213">
    <property type="pathway name" value="RHO GTPases Activate WASPs and WAVEs"/>
</dbReference>
<dbReference type="Reactome" id="R-HSA-9664422">
    <property type="pathway name" value="FCGR3A-mediated phagocytosis"/>
</dbReference>
<dbReference type="SignaLink" id="O15143"/>
<dbReference type="SIGNOR" id="O15143"/>
<dbReference type="BioGRID-ORCS" id="10095">
    <property type="hits" value="21 hits in 1156 CRISPR screens"/>
</dbReference>
<dbReference type="CD-CODE" id="8C2F96ED">
    <property type="entry name" value="Centrosome"/>
</dbReference>
<dbReference type="CD-CODE" id="91857CE7">
    <property type="entry name" value="Nucleolus"/>
</dbReference>
<dbReference type="CD-CODE" id="DEE660B4">
    <property type="entry name" value="Stress granule"/>
</dbReference>
<dbReference type="ChiTaRS" id="ARPC1B">
    <property type="organism name" value="human"/>
</dbReference>
<dbReference type="GeneWiki" id="ARPC1B"/>
<dbReference type="GenomeRNAi" id="10095"/>
<dbReference type="Pharos" id="O15143">
    <property type="development level" value="Tbio"/>
</dbReference>
<dbReference type="PRO" id="PR:O15143"/>
<dbReference type="Proteomes" id="UP000005640">
    <property type="component" value="Chromosome 7"/>
</dbReference>
<dbReference type="RNAct" id="O15143">
    <property type="molecule type" value="protein"/>
</dbReference>
<dbReference type="Bgee" id="ENSG00000130429">
    <property type="expression patterns" value="Expressed in monocyte and 99 other cell types or tissues"/>
</dbReference>
<dbReference type="ExpressionAtlas" id="O15143">
    <property type="expression patterns" value="baseline and differential"/>
</dbReference>
<dbReference type="GO" id="GO:0015629">
    <property type="term" value="C:actin cytoskeleton"/>
    <property type="evidence" value="ECO:0000304"/>
    <property type="project" value="ProtInc"/>
</dbReference>
<dbReference type="GO" id="GO:0005885">
    <property type="term" value="C:Arp2/3 protein complex"/>
    <property type="evidence" value="ECO:0000314"/>
    <property type="project" value="FlyBase"/>
</dbReference>
<dbReference type="GO" id="GO:0005829">
    <property type="term" value="C:cytosol"/>
    <property type="evidence" value="ECO:0000304"/>
    <property type="project" value="Reactome"/>
</dbReference>
<dbReference type="GO" id="GO:0070062">
    <property type="term" value="C:extracellular exosome"/>
    <property type="evidence" value="ECO:0007005"/>
    <property type="project" value="UniProtKB"/>
</dbReference>
<dbReference type="GO" id="GO:0005925">
    <property type="term" value="C:focal adhesion"/>
    <property type="evidence" value="ECO:0007005"/>
    <property type="project" value="UniProtKB"/>
</dbReference>
<dbReference type="GO" id="GO:0005634">
    <property type="term" value="C:nucleus"/>
    <property type="evidence" value="ECO:0007669"/>
    <property type="project" value="UniProtKB-SubCell"/>
</dbReference>
<dbReference type="GO" id="GO:0036284">
    <property type="term" value="C:tubulobulbar complex"/>
    <property type="evidence" value="ECO:0007669"/>
    <property type="project" value="Ensembl"/>
</dbReference>
<dbReference type="GO" id="GO:0003779">
    <property type="term" value="F:actin binding"/>
    <property type="evidence" value="ECO:0007669"/>
    <property type="project" value="UniProtKB-KW"/>
</dbReference>
<dbReference type="GO" id="GO:0044877">
    <property type="term" value="F:protein-containing complex binding"/>
    <property type="evidence" value="ECO:0007669"/>
    <property type="project" value="Ensembl"/>
</dbReference>
<dbReference type="GO" id="GO:0005200">
    <property type="term" value="F:structural constituent of cytoskeleton"/>
    <property type="evidence" value="ECO:0000314"/>
    <property type="project" value="FlyBase"/>
</dbReference>
<dbReference type="GO" id="GO:0034314">
    <property type="term" value="P:Arp2/3 complex-mediated actin nucleation"/>
    <property type="evidence" value="ECO:0000314"/>
    <property type="project" value="FlyBase"/>
</dbReference>
<dbReference type="GO" id="GO:0032355">
    <property type="term" value="P:response to estradiol"/>
    <property type="evidence" value="ECO:0007669"/>
    <property type="project" value="Ensembl"/>
</dbReference>
<dbReference type="GO" id="GO:0043627">
    <property type="term" value="P:response to estrogen"/>
    <property type="evidence" value="ECO:0007669"/>
    <property type="project" value="Ensembl"/>
</dbReference>
<dbReference type="FunFam" id="2.130.10.10:FF:000030">
    <property type="entry name" value="Actin-related protein 2/3 complex subunit"/>
    <property type="match status" value="1"/>
</dbReference>
<dbReference type="Gene3D" id="2.130.10.10">
    <property type="entry name" value="YVTN repeat-like/Quinoprotein amine dehydrogenase"/>
    <property type="match status" value="1"/>
</dbReference>
<dbReference type="InterPro" id="IPR017383">
    <property type="entry name" value="ARPC1"/>
</dbReference>
<dbReference type="InterPro" id="IPR015943">
    <property type="entry name" value="WD40/YVTN_repeat-like_dom_sf"/>
</dbReference>
<dbReference type="InterPro" id="IPR036322">
    <property type="entry name" value="WD40_repeat_dom_sf"/>
</dbReference>
<dbReference type="InterPro" id="IPR001680">
    <property type="entry name" value="WD40_rpt"/>
</dbReference>
<dbReference type="PANTHER" id="PTHR10709">
    <property type="entry name" value="ACTIN-RELATED PROTEIN 2/3 COMPLEX SUBUNIT 1"/>
    <property type="match status" value="1"/>
</dbReference>
<dbReference type="PANTHER" id="PTHR10709:SF10">
    <property type="entry name" value="ACTIN-RELATED PROTEIN 2_3 COMPLEX SUBUNIT 1B"/>
    <property type="match status" value="1"/>
</dbReference>
<dbReference type="Pfam" id="PF00400">
    <property type="entry name" value="WD40"/>
    <property type="match status" value="2"/>
</dbReference>
<dbReference type="PIRSF" id="PIRSF038093">
    <property type="entry name" value="ARP2/3_su1"/>
    <property type="match status" value="1"/>
</dbReference>
<dbReference type="SMART" id="SM00320">
    <property type="entry name" value="WD40"/>
    <property type="match status" value="6"/>
</dbReference>
<dbReference type="SUPFAM" id="SSF50978">
    <property type="entry name" value="WD40 repeat-like"/>
    <property type="match status" value="1"/>
</dbReference>
<dbReference type="PROSITE" id="PS50082">
    <property type="entry name" value="WD_REPEATS_2"/>
    <property type="match status" value="1"/>
</dbReference>
<dbReference type="PROSITE" id="PS50294">
    <property type="entry name" value="WD_REPEATS_REGION"/>
    <property type="match status" value="1"/>
</dbReference>
<proteinExistence type="evidence at protein level"/>
<sequence length="372" mass="40950">MAYHSFLVEPISCHAWNKDRTQIAICPNNHEVHIYEKSGAKWTKVHELKEHNGQVTGIDWAPESNRIVTCGTDRNAYVWTLKGRTWKPTLVILRINRAARCVRWAPNENKFAVGSGSRVISICYFEQENDWWVCKHIKKPIRSTVLSLDWHPNNVLLAAGSCDFKCRIFSAYIKEVEERPAPTPWGSKMPFGELMFESSSSCGWVHGVCFSASGSRVAWVSHDSTVCLADADKKMAVATLASETLPLLALTFITDNSLVAAGHDCFPVLFTYDAAAGMLSFGGRLDVPKQSSQRGLTARERFQNLDKKASSEGGTAAGAGLDSLHKNSVSQISVLSGGKAKCSQFCTTGMDGGMSIWDVKSLESALKDLKIK</sequence>
<protein>
    <recommendedName>
        <fullName>Actin-related protein 2/3 complex subunit 1B</fullName>
    </recommendedName>
    <alternativeName>
        <fullName>Arp2/3 complex 41 kDa subunit</fullName>
    </alternativeName>
    <alternativeName>
        <fullName>p41-ARC</fullName>
    </alternativeName>
</protein>
<reference key="1">
    <citation type="journal article" date="1997" name="J. Cell Biol.">
        <title>The human Arp2/3 complex is composed of evolutionarily conserved subunits and is localized to cellular regions of dynamic actin filament assembly.</title>
        <authorList>
            <person name="Welch M.D."/>
            <person name="Depace A.H."/>
            <person name="Verma S."/>
            <person name="Iwamatsu A."/>
            <person name="Mitchison T.J."/>
        </authorList>
    </citation>
    <scope>NUCLEOTIDE SEQUENCE [MRNA]</scope>
    <scope>FUNCTION</scope>
    <scope>SUBCELLULAR LOCATION</scope>
    <scope>IDENTIFICATION IN THE ARP2/3 COMPLEX</scope>
</reference>
<reference key="2">
    <citation type="journal article" date="2003" name="Nature">
        <title>The DNA sequence of human chromosome 7.</title>
        <authorList>
            <person name="Hillier L.W."/>
            <person name="Fulton R.S."/>
            <person name="Fulton L.A."/>
            <person name="Graves T.A."/>
            <person name="Pepin K.H."/>
            <person name="Wagner-McPherson C."/>
            <person name="Layman D."/>
            <person name="Maas J."/>
            <person name="Jaeger S."/>
            <person name="Walker R."/>
            <person name="Wylie K."/>
            <person name="Sekhon M."/>
            <person name="Becker M.C."/>
            <person name="O'Laughlin M.D."/>
            <person name="Schaller M.E."/>
            <person name="Fewell G.A."/>
            <person name="Delehaunty K.D."/>
            <person name="Miner T.L."/>
            <person name="Nash W.E."/>
            <person name="Cordes M."/>
            <person name="Du H."/>
            <person name="Sun H."/>
            <person name="Edwards J."/>
            <person name="Bradshaw-Cordum H."/>
            <person name="Ali J."/>
            <person name="Andrews S."/>
            <person name="Isak A."/>
            <person name="Vanbrunt A."/>
            <person name="Nguyen C."/>
            <person name="Du F."/>
            <person name="Lamar B."/>
            <person name="Courtney L."/>
            <person name="Kalicki J."/>
            <person name="Ozersky P."/>
            <person name="Bielicki L."/>
            <person name="Scott K."/>
            <person name="Holmes A."/>
            <person name="Harkins R."/>
            <person name="Harris A."/>
            <person name="Strong C.M."/>
            <person name="Hou S."/>
            <person name="Tomlinson C."/>
            <person name="Dauphin-Kohlberg S."/>
            <person name="Kozlowicz-Reilly A."/>
            <person name="Leonard S."/>
            <person name="Rohlfing T."/>
            <person name="Rock S.M."/>
            <person name="Tin-Wollam A.-M."/>
            <person name="Abbott A."/>
            <person name="Minx P."/>
            <person name="Maupin R."/>
            <person name="Strowmatt C."/>
            <person name="Latreille P."/>
            <person name="Miller N."/>
            <person name="Johnson D."/>
            <person name="Murray J."/>
            <person name="Woessner J.P."/>
            <person name="Wendl M.C."/>
            <person name="Yang S.-P."/>
            <person name="Schultz B.R."/>
            <person name="Wallis J.W."/>
            <person name="Spieth J."/>
            <person name="Bieri T.A."/>
            <person name="Nelson J.O."/>
            <person name="Berkowicz N."/>
            <person name="Wohldmann P.E."/>
            <person name="Cook L.L."/>
            <person name="Hickenbotham M.T."/>
            <person name="Eldred J."/>
            <person name="Williams D."/>
            <person name="Bedell J.A."/>
            <person name="Mardis E.R."/>
            <person name="Clifton S.W."/>
            <person name="Chissoe S.L."/>
            <person name="Marra M.A."/>
            <person name="Raymond C."/>
            <person name="Haugen E."/>
            <person name="Gillett W."/>
            <person name="Zhou Y."/>
            <person name="James R."/>
            <person name="Phelps K."/>
            <person name="Iadanoto S."/>
            <person name="Bubb K."/>
            <person name="Simms E."/>
            <person name="Levy R."/>
            <person name="Clendenning J."/>
            <person name="Kaul R."/>
            <person name="Kent W.J."/>
            <person name="Furey T.S."/>
            <person name="Baertsch R.A."/>
            <person name="Brent M.R."/>
            <person name="Keibler E."/>
            <person name="Flicek P."/>
            <person name="Bork P."/>
            <person name="Suyama M."/>
            <person name="Bailey J.A."/>
            <person name="Portnoy M.E."/>
            <person name="Torrents D."/>
            <person name="Chinwalla A.T."/>
            <person name="Gish W.R."/>
            <person name="Eddy S.R."/>
            <person name="McPherson J.D."/>
            <person name="Olson M.V."/>
            <person name="Eichler E.E."/>
            <person name="Green E.D."/>
            <person name="Waterston R.H."/>
            <person name="Wilson R.K."/>
        </authorList>
    </citation>
    <scope>NUCLEOTIDE SEQUENCE [LARGE SCALE GENOMIC DNA]</scope>
</reference>
<reference key="3">
    <citation type="journal article" date="2004" name="Genome Res.">
        <title>The status, quality, and expansion of the NIH full-length cDNA project: the Mammalian Gene Collection (MGC).</title>
        <authorList>
            <consortium name="The MGC Project Team"/>
        </authorList>
    </citation>
    <scope>NUCLEOTIDE SEQUENCE [LARGE SCALE MRNA]</scope>
    <source>
        <tissue>Lung</tissue>
        <tissue>Placenta</tissue>
        <tissue>Skin</tissue>
    </source>
</reference>
<reference key="4">
    <citation type="journal article" date="2003" name="Nat. Biotechnol.">
        <title>Exploring proteomes and analyzing protein processing by mass spectrometric identification of sorted N-terminal peptides.</title>
        <authorList>
            <person name="Gevaert K."/>
            <person name="Goethals M."/>
            <person name="Martens L."/>
            <person name="Van Damme J."/>
            <person name="Staes A."/>
            <person name="Thomas G.R."/>
            <person name="Vandekerckhove J."/>
        </authorList>
    </citation>
    <scope>PROTEIN SEQUENCE OF 2-20</scope>
    <source>
        <tissue>Platelet</tissue>
    </source>
</reference>
<reference key="5">
    <citation type="journal article" date="2001" name="Mol. Cell">
        <title>Reconstitution of human Arp2/3 complex reveals critical roles of individual subunits in complex structure and activity.</title>
        <authorList>
            <person name="Gournier H."/>
            <person name="Goley E.D."/>
            <person name="Niederstrasser H."/>
            <person name="Trinh T."/>
            <person name="Welch M.D."/>
        </authorList>
    </citation>
    <scope>FUNCTION</scope>
    <scope>SUBCELLULAR LOCATION</scope>
    <scope>IDENTIFICATION IN THE ARP2/3 COMPLEX</scope>
</reference>
<reference key="6">
    <citation type="journal article" date="2011" name="BMC Syst. Biol.">
        <title>Initial characterization of the human central proteome.</title>
        <authorList>
            <person name="Burkard T.R."/>
            <person name="Planyavsky M."/>
            <person name="Kaupe I."/>
            <person name="Breitwieser F.P."/>
            <person name="Buerckstuemmer T."/>
            <person name="Bennett K.L."/>
            <person name="Superti-Furga G."/>
            <person name="Colinge J."/>
        </authorList>
    </citation>
    <scope>IDENTIFICATION BY MASS SPECTROMETRY [LARGE SCALE ANALYSIS]</scope>
</reference>
<reference key="7">
    <citation type="journal article" date="2017" name="Nat. Commun.">
        <title>Loss of the Arp2/3 complex component ARPC1B causes platelet abnormalities and predisposes to inflammatory disease.</title>
        <authorList>
            <person name="Kahr W.H."/>
            <person name="Pluthero F.G."/>
            <person name="Elkadri A."/>
            <person name="Warner N."/>
            <person name="Drobac M."/>
            <person name="Chen C.H."/>
            <person name="Lo R.W."/>
            <person name="Li L."/>
            <person name="Li R."/>
            <person name="Li Q."/>
            <person name="Thoeni C."/>
            <person name="Pan J."/>
            <person name="Leung G."/>
            <person name="Lara-Corrales I."/>
            <person name="Murchie R."/>
            <person name="Cutz E."/>
            <person name="Laxer R.M."/>
            <person name="Upton J."/>
            <person name="Roifman C.M."/>
            <person name="Yeung R.S."/>
            <person name="Brumell J.H."/>
            <person name="Muise A.M."/>
        </authorList>
    </citation>
    <scope>INVOLVEMENT IN IMD71</scope>
    <scope>VARIANTS IMD71 VAL-105 AND THR-238</scope>
</reference>
<reference key="8">
    <citation type="journal article" date="2018" name="Nature">
        <title>Nuclear ARP2/3 drives DNA break clustering for homology-directed repair.</title>
        <authorList>
            <person name="Schrank B.R."/>
            <person name="Aparicio T."/>
            <person name="Li Y."/>
            <person name="Chang W."/>
            <person name="Chait B.T."/>
            <person name="Gundersen G.G."/>
            <person name="Gottesman M.E."/>
            <person name="Gautier J."/>
        </authorList>
    </citation>
    <scope>FUNCTION</scope>
    <scope>SUBCELLULAR LOCATION</scope>
</reference>
<comment type="function">
    <text evidence="1 4 5">Component of the Arp2/3 complex, a multiprotein complex that mediates actin polymerization upon stimulation by nucleation-promoting factor (NPF) (PubMed:11741539, PubMed:9230079). The Arp2/3 complex mediates the formation of branched actin networks in the cytoplasm, providing the force for cell motility (PubMed:11741539, PubMed:9230079). In addition to its role in the cytoplasmic cytoskeleton, the Arp2/3 complex also promotes actin polymerization in the nucleus, thereby regulating gene transcription and repair of damaged DNA (PubMed:29925947). The Arp2/3 complex promotes homologous recombination (HR) repair in response to DNA damage by promoting nuclear actin polymerization, leading to drive motility of double-strand breaks (DSBs) (PubMed:29925947).</text>
</comment>
<comment type="subunit">
    <text evidence="1 5">Component of the Arp2/3 complex composed of ACTR2/ARP2, ACTR3/ARP3, ARPC1B/p41-ARC, ARPC2/p34-ARC, ARPC3/p21-ARC, ARPC4/p20-ARC and ARPC5/p16-ARC.</text>
</comment>
<comment type="interaction">
    <interactant intactId="EBI-1044647">
        <id>O15143</id>
    </interactant>
    <interactant intactId="EBI-16631153">
        <id>Q5ZTM4</id>
        <label>legK2</label>
    </interactant>
    <organismsDiffer>true</organismsDiffer>
    <experiments>3</experiments>
</comment>
<comment type="subcellular location">
    <subcellularLocation>
        <location evidence="1 5">Cytoplasm</location>
        <location evidence="1 5">Cytoskeleton</location>
    </subcellularLocation>
    <subcellularLocation>
        <location evidence="4">Nucleus</location>
    </subcellularLocation>
</comment>
<comment type="disease" evidence="3">
    <disease id="DI-05117">
        <name>Immunodeficiency 71 with inflammatory disease and congenital thrombocytopenia</name>
        <acronym>IMD71</acronym>
        <description>An autosomal recessive disorder characterized by platelet abnormalities, vasculitis, eosinophilia, and predisposition to inflammatory diseases.</description>
        <dbReference type="MIM" id="617718"/>
    </disease>
    <text>The disease is caused by variants affecting the gene represented in this entry.</text>
</comment>
<comment type="similarity">
    <text evidence="6">Belongs to the WD repeat ARPC1 family.</text>
</comment>
<name>ARC1B_HUMAN</name>
<keyword id="KW-0002">3D-structure</keyword>
<keyword id="KW-0009">Actin-binding</keyword>
<keyword id="KW-0963">Cytoplasm</keyword>
<keyword id="KW-0206">Cytoskeleton</keyword>
<keyword id="KW-0903">Direct protein sequencing</keyword>
<keyword id="KW-0225">Disease variant</keyword>
<keyword id="KW-0539">Nucleus</keyword>
<keyword id="KW-1267">Proteomics identification</keyword>
<keyword id="KW-1185">Reference proteome</keyword>
<keyword id="KW-0677">Repeat</keyword>
<keyword id="KW-0853">WD repeat</keyword>
<feature type="initiator methionine" description="Removed" evidence="2">
    <location>
        <position position="1"/>
    </location>
</feature>
<feature type="chain" id="PRO_0000050855" description="Actin-related protein 2/3 complex subunit 1B">
    <location>
        <begin position="2"/>
        <end position="372"/>
    </location>
</feature>
<feature type="repeat" description="WD 1">
    <location>
        <begin position="6"/>
        <end position="45"/>
    </location>
</feature>
<feature type="repeat" description="WD 2">
    <location>
        <begin position="50"/>
        <end position="89"/>
    </location>
</feature>
<feature type="repeat" description="WD 3">
    <location>
        <begin position="94"/>
        <end position="135"/>
    </location>
</feature>
<feature type="repeat" description="WD 4">
    <location>
        <begin position="140"/>
        <end position="179"/>
    </location>
</feature>
<feature type="repeat" description="WD 5">
    <location>
        <begin position="242"/>
        <end position="280"/>
    </location>
</feature>
<feature type="repeat" description="WD 6">
    <location>
        <begin position="324"/>
        <end position="367"/>
    </location>
</feature>
<feature type="sequence variant" id="VAR_014477" description="In dbSNP:rs1045012.">
    <original>K</original>
    <variation>N</variation>
    <location>
        <position position="37"/>
    </location>
</feature>
<feature type="sequence variant" id="VAR_080353" description="In IMD71; uncertain significance." evidence="3">
    <original>A</original>
    <variation>V</variation>
    <location>
        <position position="105"/>
    </location>
</feature>
<feature type="sequence variant" id="VAR_080354" description="In IMD71; uncertain significance; dbSNP:rs147238850." evidence="3">
    <original>A</original>
    <variation>T</variation>
    <location>
        <position position="238"/>
    </location>
</feature>